<proteinExistence type="inferred from homology"/>
<accession>B7JQ14</accession>
<dbReference type="EC" id="2.5.1.72" evidence="1"/>
<dbReference type="EMBL" id="CP001283">
    <property type="protein sequence ID" value="ACK88303.1"/>
    <property type="molecule type" value="Genomic_DNA"/>
</dbReference>
<dbReference type="RefSeq" id="WP_000025295.1">
    <property type="nucleotide sequence ID" value="NC_011773.1"/>
</dbReference>
<dbReference type="SMR" id="B7JQ14"/>
<dbReference type="GeneID" id="93006672"/>
<dbReference type="KEGG" id="bcu:BCAH820_4508"/>
<dbReference type="HOGENOM" id="CLU_047382_2_0_9"/>
<dbReference type="UniPathway" id="UPA00253">
    <property type="reaction ID" value="UER00327"/>
</dbReference>
<dbReference type="Proteomes" id="UP000001363">
    <property type="component" value="Chromosome"/>
</dbReference>
<dbReference type="GO" id="GO:0005829">
    <property type="term" value="C:cytosol"/>
    <property type="evidence" value="ECO:0007669"/>
    <property type="project" value="TreeGrafter"/>
</dbReference>
<dbReference type="GO" id="GO:0051539">
    <property type="term" value="F:4 iron, 4 sulfur cluster binding"/>
    <property type="evidence" value="ECO:0007669"/>
    <property type="project" value="UniProtKB-KW"/>
</dbReference>
<dbReference type="GO" id="GO:0046872">
    <property type="term" value="F:metal ion binding"/>
    <property type="evidence" value="ECO:0007669"/>
    <property type="project" value="UniProtKB-KW"/>
</dbReference>
<dbReference type="GO" id="GO:0008987">
    <property type="term" value="F:quinolinate synthetase A activity"/>
    <property type="evidence" value="ECO:0007669"/>
    <property type="project" value="UniProtKB-UniRule"/>
</dbReference>
<dbReference type="GO" id="GO:0034628">
    <property type="term" value="P:'de novo' NAD biosynthetic process from L-aspartate"/>
    <property type="evidence" value="ECO:0007669"/>
    <property type="project" value="TreeGrafter"/>
</dbReference>
<dbReference type="FunFam" id="3.40.50.10800:FF:000001">
    <property type="entry name" value="Quinolinate synthase A"/>
    <property type="match status" value="1"/>
</dbReference>
<dbReference type="Gene3D" id="3.40.50.10800">
    <property type="entry name" value="NadA-like"/>
    <property type="match status" value="3"/>
</dbReference>
<dbReference type="HAMAP" id="MF_00569">
    <property type="entry name" value="NadA_type3"/>
    <property type="match status" value="1"/>
</dbReference>
<dbReference type="InterPro" id="IPR003473">
    <property type="entry name" value="NadA"/>
</dbReference>
<dbReference type="InterPro" id="IPR036094">
    <property type="entry name" value="NadA_sf"/>
</dbReference>
<dbReference type="InterPro" id="IPR023515">
    <property type="entry name" value="Quinolinate_synth_A_type3"/>
</dbReference>
<dbReference type="NCBIfam" id="TIGR00550">
    <property type="entry name" value="nadA"/>
    <property type="match status" value="1"/>
</dbReference>
<dbReference type="NCBIfam" id="NF006880">
    <property type="entry name" value="PRK09375.2-1"/>
    <property type="match status" value="1"/>
</dbReference>
<dbReference type="NCBIfam" id="NF006883">
    <property type="entry name" value="PRK09375.2-4"/>
    <property type="match status" value="1"/>
</dbReference>
<dbReference type="PANTHER" id="PTHR30573:SF0">
    <property type="entry name" value="QUINOLINATE SYNTHASE, CHLOROPLASTIC"/>
    <property type="match status" value="1"/>
</dbReference>
<dbReference type="PANTHER" id="PTHR30573">
    <property type="entry name" value="QUINOLINATE SYNTHETASE A"/>
    <property type="match status" value="1"/>
</dbReference>
<dbReference type="Pfam" id="PF02445">
    <property type="entry name" value="NadA"/>
    <property type="match status" value="1"/>
</dbReference>
<dbReference type="SUPFAM" id="SSF142754">
    <property type="entry name" value="NadA-like"/>
    <property type="match status" value="1"/>
</dbReference>
<gene>
    <name evidence="1" type="primary">nadA</name>
    <name type="ordered locus">BCAH820_4508</name>
</gene>
<evidence type="ECO:0000255" key="1">
    <source>
        <dbReference type="HAMAP-Rule" id="MF_00569"/>
    </source>
</evidence>
<organism>
    <name type="scientific">Bacillus cereus (strain AH820)</name>
    <dbReference type="NCBI Taxonomy" id="405535"/>
    <lineage>
        <taxon>Bacteria</taxon>
        <taxon>Bacillati</taxon>
        <taxon>Bacillota</taxon>
        <taxon>Bacilli</taxon>
        <taxon>Bacillales</taxon>
        <taxon>Bacillaceae</taxon>
        <taxon>Bacillus</taxon>
        <taxon>Bacillus cereus group</taxon>
    </lineage>
</organism>
<reference key="1">
    <citation type="submission" date="2008-10" db="EMBL/GenBank/DDBJ databases">
        <title>Genome sequence of Bacillus cereus AH820.</title>
        <authorList>
            <person name="Dodson R.J."/>
            <person name="Durkin A.S."/>
            <person name="Rosovitz M.J."/>
            <person name="Rasko D.A."/>
            <person name="Hoffmaster A."/>
            <person name="Ravel J."/>
            <person name="Sutton G."/>
        </authorList>
    </citation>
    <scope>NUCLEOTIDE SEQUENCE [LARGE SCALE GENOMIC DNA]</scope>
    <source>
        <strain>AH820</strain>
    </source>
</reference>
<sequence>MSILEKVQPIETMLPERYYTMSTEDMEKRVREIKEKMGETLFIPGHHYQKDEVVQFSDAAGDSLQLAQVAASNKEAKYIVFCGVHFMAETADMLTTDEQVVILPDMRAGCSMADMADIEQTERAWKELTKLFGDTMIPLTYVNSTAAIKAFCGRNGGATVTSSNAKQMVSWAFTQKERLVFLPDQHLGRNTAYDLGIPLDKMAVWDPHTDSLEYDGDIEEIQVILWKGHCSVHQNFTVKNIENVRKNHPDMNIIVHPECCYEVVAASDYAGSTKYIIDMIESAPSGSKWAIGTEMNLVNRIIQQHPDKEIVSLNPFMCPCLTMNRIDLPHLLWALETIERGEEINVISVDKQVTEEAVLALNRMLERV</sequence>
<protein>
    <recommendedName>
        <fullName evidence="1">Quinolinate synthase</fullName>
        <ecNumber evidence="1">2.5.1.72</ecNumber>
    </recommendedName>
</protein>
<keyword id="KW-0004">4Fe-4S</keyword>
<keyword id="KW-0963">Cytoplasm</keyword>
<keyword id="KW-0408">Iron</keyword>
<keyword id="KW-0411">Iron-sulfur</keyword>
<keyword id="KW-0479">Metal-binding</keyword>
<keyword id="KW-0662">Pyridine nucleotide biosynthesis</keyword>
<keyword id="KW-0808">Transferase</keyword>
<comment type="function">
    <text evidence="1">Catalyzes the condensation of iminoaspartate with dihydroxyacetone phosphate to form quinolinate.</text>
</comment>
<comment type="catalytic activity">
    <reaction evidence="1">
        <text>iminosuccinate + dihydroxyacetone phosphate = quinolinate + phosphate + 2 H2O + H(+)</text>
        <dbReference type="Rhea" id="RHEA:25888"/>
        <dbReference type="ChEBI" id="CHEBI:15377"/>
        <dbReference type="ChEBI" id="CHEBI:15378"/>
        <dbReference type="ChEBI" id="CHEBI:29959"/>
        <dbReference type="ChEBI" id="CHEBI:43474"/>
        <dbReference type="ChEBI" id="CHEBI:57642"/>
        <dbReference type="ChEBI" id="CHEBI:77875"/>
        <dbReference type="EC" id="2.5.1.72"/>
    </reaction>
    <physiologicalReaction direction="left-to-right" evidence="1">
        <dbReference type="Rhea" id="RHEA:25889"/>
    </physiologicalReaction>
</comment>
<comment type="cofactor">
    <cofactor evidence="1">
        <name>[4Fe-4S] cluster</name>
        <dbReference type="ChEBI" id="CHEBI:49883"/>
    </cofactor>
    <text evidence="1">Binds 1 [4Fe-4S] cluster per subunit.</text>
</comment>
<comment type="pathway">
    <text evidence="1">Cofactor biosynthesis; NAD(+) biosynthesis; quinolinate from iminoaspartate: step 1/1.</text>
</comment>
<comment type="subcellular location">
    <subcellularLocation>
        <location evidence="1">Cytoplasm</location>
    </subcellularLocation>
</comment>
<comment type="similarity">
    <text evidence="1">Belongs to the quinolinate synthase family. Type 3 subfamily.</text>
</comment>
<name>NADA_BACC0</name>
<feature type="chain" id="PRO_1000129451" description="Quinolinate synthase">
    <location>
        <begin position="1"/>
        <end position="368"/>
    </location>
</feature>
<feature type="binding site" evidence="1">
    <location>
        <position position="46"/>
    </location>
    <ligand>
        <name>iminosuccinate</name>
        <dbReference type="ChEBI" id="CHEBI:77875"/>
    </ligand>
</feature>
<feature type="binding site" evidence="1">
    <location>
        <position position="63"/>
    </location>
    <ligand>
        <name>iminosuccinate</name>
        <dbReference type="ChEBI" id="CHEBI:77875"/>
    </ligand>
</feature>
<feature type="binding site" evidence="1">
    <location>
        <position position="110"/>
    </location>
    <ligand>
        <name>[4Fe-4S] cluster</name>
        <dbReference type="ChEBI" id="CHEBI:49883"/>
    </ligand>
</feature>
<feature type="binding site" evidence="1">
    <location>
        <begin position="141"/>
        <end position="143"/>
    </location>
    <ligand>
        <name>iminosuccinate</name>
        <dbReference type="ChEBI" id="CHEBI:77875"/>
    </ligand>
</feature>
<feature type="binding site" evidence="1">
    <location>
        <position position="162"/>
    </location>
    <ligand>
        <name>iminosuccinate</name>
        <dbReference type="ChEBI" id="CHEBI:77875"/>
    </ligand>
</feature>
<feature type="binding site" evidence="1">
    <location>
        <position position="230"/>
    </location>
    <ligand>
        <name>[4Fe-4S] cluster</name>
        <dbReference type="ChEBI" id="CHEBI:49883"/>
    </ligand>
</feature>
<feature type="binding site" evidence="1">
    <location>
        <begin position="256"/>
        <end position="258"/>
    </location>
    <ligand>
        <name>iminosuccinate</name>
        <dbReference type="ChEBI" id="CHEBI:77875"/>
    </ligand>
</feature>
<feature type="binding site" evidence="1">
    <location>
        <position position="273"/>
    </location>
    <ligand>
        <name>iminosuccinate</name>
        <dbReference type="ChEBI" id="CHEBI:77875"/>
    </ligand>
</feature>
<feature type="binding site" evidence="1">
    <location>
        <position position="320"/>
    </location>
    <ligand>
        <name>[4Fe-4S] cluster</name>
        <dbReference type="ChEBI" id="CHEBI:49883"/>
    </ligand>
</feature>